<evidence type="ECO:0000255" key="1">
    <source>
        <dbReference type="HAMAP-Rule" id="MF_01394"/>
    </source>
</evidence>
<protein>
    <recommendedName>
        <fullName evidence="1">NADH-quinone oxidoreductase subunit A</fullName>
        <ecNumber evidence="1">7.1.1.-</ecNumber>
    </recommendedName>
    <alternativeName>
        <fullName evidence="1">NADH dehydrogenase I subunit A</fullName>
    </alternativeName>
    <alternativeName>
        <fullName evidence="1">NDH-1 subunit A</fullName>
    </alternativeName>
    <alternativeName>
        <fullName evidence="1">NUO1</fullName>
    </alternativeName>
</protein>
<dbReference type="EC" id="7.1.1.-" evidence="1"/>
<dbReference type="EMBL" id="CP000285">
    <property type="protein sequence ID" value="ABE60476.1"/>
    <property type="molecule type" value="Genomic_DNA"/>
</dbReference>
<dbReference type="RefSeq" id="WP_011508422.1">
    <property type="nucleotide sequence ID" value="NC_007963.1"/>
</dbReference>
<dbReference type="SMR" id="Q1QST2"/>
<dbReference type="STRING" id="290398.Csal_3132"/>
<dbReference type="GeneID" id="95335827"/>
<dbReference type="KEGG" id="csa:Csal_3132"/>
<dbReference type="eggNOG" id="COG0838">
    <property type="taxonomic scope" value="Bacteria"/>
</dbReference>
<dbReference type="HOGENOM" id="CLU_119549_2_1_6"/>
<dbReference type="OrthoDB" id="9791970at2"/>
<dbReference type="Proteomes" id="UP000000239">
    <property type="component" value="Chromosome"/>
</dbReference>
<dbReference type="GO" id="GO:0030964">
    <property type="term" value="C:NADH dehydrogenase complex"/>
    <property type="evidence" value="ECO:0007669"/>
    <property type="project" value="TreeGrafter"/>
</dbReference>
<dbReference type="GO" id="GO:0005886">
    <property type="term" value="C:plasma membrane"/>
    <property type="evidence" value="ECO:0007669"/>
    <property type="project" value="UniProtKB-SubCell"/>
</dbReference>
<dbReference type="GO" id="GO:0008137">
    <property type="term" value="F:NADH dehydrogenase (ubiquinone) activity"/>
    <property type="evidence" value="ECO:0007669"/>
    <property type="project" value="InterPro"/>
</dbReference>
<dbReference type="GO" id="GO:0050136">
    <property type="term" value="F:NADH:ubiquinone reductase (non-electrogenic) activity"/>
    <property type="evidence" value="ECO:0007669"/>
    <property type="project" value="UniProtKB-UniRule"/>
</dbReference>
<dbReference type="GO" id="GO:0048038">
    <property type="term" value="F:quinone binding"/>
    <property type="evidence" value="ECO:0007669"/>
    <property type="project" value="UniProtKB-KW"/>
</dbReference>
<dbReference type="Gene3D" id="1.20.58.1610">
    <property type="entry name" value="NADH:ubiquinone/plastoquinone oxidoreductase, chain 3"/>
    <property type="match status" value="1"/>
</dbReference>
<dbReference type="HAMAP" id="MF_01394">
    <property type="entry name" value="NDH1_NuoA"/>
    <property type="match status" value="1"/>
</dbReference>
<dbReference type="InterPro" id="IPR023043">
    <property type="entry name" value="NAD(P)H_OxRDtase_bac/plastid"/>
</dbReference>
<dbReference type="InterPro" id="IPR000440">
    <property type="entry name" value="NADH_UbQ/plastoQ_OxRdtase_su3"/>
</dbReference>
<dbReference type="InterPro" id="IPR038430">
    <property type="entry name" value="NDAH_ubi_oxred_su3_sf"/>
</dbReference>
<dbReference type="PANTHER" id="PTHR11058:SF21">
    <property type="entry name" value="NADH-QUINONE OXIDOREDUCTASE SUBUNIT A"/>
    <property type="match status" value="1"/>
</dbReference>
<dbReference type="PANTHER" id="PTHR11058">
    <property type="entry name" value="NADH-UBIQUINONE OXIDOREDUCTASE CHAIN 3"/>
    <property type="match status" value="1"/>
</dbReference>
<dbReference type="Pfam" id="PF00507">
    <property type="entry name" value="Oxidored_q4"/>
    <property type="match status" value="1"/>
</dbReference>
<feature type="chain" id="PRO_0000362663" description="NADH-quinone oxidoreductase subunit A">
    <location>
        <begin position="1"/>
        <end position="139"/>
    </location>
</feature>
<feature type="transmembrane region" description="Helical" evidence="1">
    <location>
        <begin position="16"/>
        <end position="36"/>
    </location>
</feature>
<feature type="transmembrane region" description="Helical" evidence="1">
    <location>
        <begin position="69"/>
        <end position="89"/>
    </location>
</feature>
<feature type="transmembrane region" description="Helical" evidence="1">
    <location>
        <begin position="94"/>
        <end position="114"/>
    </location>
</feature>
<reference key="1">
    <citation type="journal article" date="2011" name="Stand. Genomic Sci.">
        <title>Complete genome sequence of the halophilic and highly halotolerant Chromohalobacter salexigens type strain (1H11(T)).</title>
        <authorList>
            <person name="Copeland A."/>
            <person name="O'Connor K."/>
            <person name="Lucas S."/>
            <person name="Lapidus A."/>
            <person name="Berry K.W."/>
            <person name="Detter J.C."/>
            <person name="Del Rio T.G."/>
            <person name="Hammon N."/>
            <person name="Dalin E."/>
            <person name="Tice H."/>
            <person name="Pitluck S."/>
            <person name="Bruce D."/>
            <person name="Goodwin L."/>
            <person name="Han C."/>
            <person name="Tapia R."/>
            <person name="Saunders E."/>
            <person name="Schmutz J."/>
            <person name="Brettin T."/>
            <person name="Larimer F."/>
            <person name="Land M."/>
            <person name="Hauser L."/>
            <person name="Vargas C."/>
            <person name="Nieto J.J."/>
            <person name="Kyrpides N.C."/>
            <person name="Ivanova N."/>
            <person name="Goker M."/>
            <person name="Klenk H.P."/>
            <person name="Csonka L.N."/>
            <person name="Woyke T."/>
        </authorList>
    </citation>
    <scope>NUCLEOTIDE SEQUENCE [LARGE SCALE GENOMIC DNA]</scope>
    <source>
        <strain>ATCC BAA-138 / DSM 3043 / CIP 106854 / NCIMB 13768 / 1H11</strain>
    </source>
</reference>
<organism>
    <name type="scientific">Chromohalobacter salexigens (strain ATCC BAA-138 / DSM 3043 / CIP 106854 / NCIMB 13768 / 1H11)</name>
    <dbReference type="NCBI Taxonomy" id="290398"/>
    <lineage>
        <taxon>Bacteria</taxon>
        <taxon>Pseudomonadati</taxon>
        <taxon>Pseudomonadota</taxon>
        <taxon>Gammaproteobacteria</taxon>
        <taxon>Oceanospirillales</taxon>
        <taxon>Halomonadaceae</taxon>
        <taxon>Chromohalobacter</taxon>
    </lineage>
</organism>
<keyword id="KW-0997">Cell inner membrane</keyword>
<keyword id="KW-1003">Cell membrane</keyword>
<keyword id="KW-0472">Membrane</keyword>
<keyword id="KW-0520">NAD</keyword>
<keyword id="KW-0874">Quinone</keyword>
<keyword id="KW-1185">Reference proteome</keyword>
<keyword id="KW-1278">Translocase</keyword>
<keyword id="KW-0812">Transmembrane</keyword>
<keyword id="KW-1133">Transmembrane helix</keyword>
<keyword id="KW-0813">Transport</keyword>
<keyword id="KW-0830">Ubiquinone</keyword>
<accession>Q1QST2</accession>
<gene>
    <name evidence="1" type="primary">nuoA</name>
    <name type="ordered locus">Csal_3132</name>
</gene>
<name>NUOA_CHRSD</name>
<comment type="function">
    <text evidence="1">NDH-1 shuttles electrons from NADH, via FMN and iron-sulfur (Fe-S) centers, to quinones in the respiratory chain. The immediate electron acceptor for the enzyme in this species is believed to be ubiquinone. Couples the redox reaction to proton translocation (for every two electrons transferred, four hydrogen ions are translocated across the cytoplasmic membrane), and thus conserves the redox energy in a proton gradient.</text>
</comment>
<comment type="catalytic activity">
    <reaction evidence="1">
        <text>a quinone + NADH + 5 H(+)(in) = a quinol + NAD(+) + 4 H(+)(out)</text>
        <dbReference type="Rhea" id="RHEA:57888"/>
        <dbReference type="ChEBI" id="CHEBI:15378"/>
        <dbReference type="ChEBI" id="CHEBI:24646"/>
        <dbReference type="ChEBI" id="CHEBI:57540"/>
        <dbReference type="ChEBI" id="CHEBI:57945"/>
        <dbReference type="ChEBI" id="CHEBI:132124"/>
    </reaction>
</comment>
<comment type="subunit">
    <text evidence="1">NDH-1 is composed of 14 different subunits. Subunits NuoA, H, J, K, L, M, N constitute the membrane sector of the complex.</text>
</comment>
<comment type="subcellular location">
    <subcellularLocation>
        <location evidence="1">Cell inner membrane</location>
        <topology evidence="1">Multi-pass membrane protein</topology>
    </subcellularLocation>
</comment>
<comment type="similarity">
    <text evidence="1">Belongs to the complex I subunit 3 family.</text>
</comment>
<proteinExistence type="inferred from homology"/>
<sequence length="139" mass="15057">MTDEATALIAQYWATGLFIIAVFALCALMIGAASLLGGRSRGPSKSLPFESGVVGTGSARQRFSVKFYLVAMLFVIFDIEAVFLFAWAVSVREVGWEGFAGAAVFIFILLAGLVYDSRVGALEWAPRKRGRSPDIVTQR</sequence>